<evidence type="ECO:0000250" key="1">
    <source>
        <dbReference type="UniProtKB" id="Q02367"/>
    </source>
</evidence>
<evidence type="ECO:0000255" key="2"/>
<evidence type="ECO:0000269" key="3">
    <source>
    </source>
</evidence>
<evidence type="ECO:0000305" key="4"/>
<evidence type="ECO:0007744" key="5">
    <source>
        <dbReference type="PDB" id="8PW5"/>
    </source>
</evidence>
<evidence type="ECO:0007744" key="6">
    <source>
    </source>
</evidence>
<evidence type="ECO:0007829" key="7">
    <source>
        <dbReference type="PDB" id="8OM1"/>
    </source>
</evidence>
<gene>
    <name type="primary">Ndufb6</name>
    <name type="synonym">Gm137</name>
</gene>
<name>NDUB6_MOUSE</name>
<organism>
    <name type="scientific">Mus musculus</name>
    <name type="common">Mouse</name>
    <dbReference type="NCBI Taxonomy" id="10090"/>
    <lineage>
        <taxon>Eukaryota</taxon>
        <taxon>Metazoa</taxon>
        <taxon>Chordata</taxon>
        <taxon>Craniata</taxon>
        <taxon>Vertebrata</taxon>
        <taxon>Euteleostomi</taxon>
        <taxon>Mammalia</taxon>
        <taxon>Eutheria</taxon>
        <taxon>Euarchontoglires</taxon>
        <taxon>Glires</taxon>
        <taxon>Rodentia</taxon>
        <taxon>Myomorpha</taxon>
        <taxon>Muroidea</taxon>
        <taxon>Muridae</taxon>
        <taxon>Murinae</taxon>
        <taxon>Mus</taxon>
        <taxon>Mus</taxon>
    </lineage>
</organism>
<protein>
    <recommendedName>
        <fullName>NADH dehydrogenase [ubiquinone] 1 beta subcomplex subunit 6</fullName>
    </recommendedName>
    <alternativeName>
        <fullName>Complex I-B17</fullName>
        <shortName>CI-B17</shortName>
    </alternativeName>
    <alternativeName>
        <fullName>NADH-ubiquinone oxidoreductase B17 subunit</fullName>
    </alternativeName>
</protein>
<sequence length="128" mass="15515">MSGYTPDEKLRLQQLRELRRRWLKDQELSPREPVLPPRRMWPLERFWDNFLRDGAVWKNMVFKAYRSSLFAVSHVLIPMWFVHYYVKYHMATKPYTIVSSKPRIFPGDTILETGEVIPPMRDFPDQHH</sequence>
<feature type="initiator methionine" description="Removed" evidence="1">
    <location>
        <position position="1"/>
    </location>
</feature>
<feature type="chain" id="PRO_0000233980" description="NADH dehydrogenase [ubiquinone] 1 beta subcomplex subunit 6">
    <location>
        <begin position="2"/>
        <end position="128"/>
    </location>
</feature>
<feature type="transmembrane region" description="Helical" evidence="2">
    <location>
        <begin position="64"/>
        <end position="86"/>
    </location>
</feature>
<feature type="modified residue" description="N-acetylserine" evidence="1">
    <location>
        <position position="2"/>
    </location>
</feature>
<feature type="modified residue" description="N6-acetyllysine" evidence="6">
    <location>
        <position position="24"/>
    </location>
</feature>
<feature type="helix" evidence="7">
    <location>
        <begin position="6"/>
        <end position="25"/>
    </location>
</feature>
<feature type="helix" evidence="7">
    <location>
        <begin position="65"/>
        <end position="74"/>
    </location>
</feature>
<feature type="helix" evidence="7">
    <location>
        <begin position="76"/>
        <end position="89"/>
    </location>
</feature>
<feature type="turn" evidence="7">
    <location>
        <begin position="90"/>
        <end position="92"/>
    </location>
</feature>
<feature type="strand" evidence="7">
    <location>
        <begin position="96"/>
        <end position="99"/>
    </location>
</feature>
<feature type="turn" evidence="7">
    <location>
        <begin position="111"/>
        <end position="113"/>
    </location>
</feature>
<dbReference type="EMBL" id="AK146762">
    <property type="protein sequence ID" value="BAE27414.1"/>
    <property type="molecule type" value="mRNA"/>
</dbReference>
<dbReference type="CCDS" id="CCDS18045.1"/>
<dbReference type="RefSeq" id="NP_001028477.1">
    <property type="nucleotide sequence ID" value="NM_001033305.3"/>
</dbReference>
<dbReference type="PDB" id="6G2J">
    <property type="method" value="EM"/>
    <property type="resolution" value="3.30 A"/>
    <property type="chains" value="i=1-128"/>
</dbReference>
<dbReference type="PDB" id="6G72">
    <property type="method" value="EM"/>
    <property type="resolution" value="3.90 A"/>
    <property type="chains" value="i=1-128"/>
</dbReference>
<dbReference type="PDB" id="6ZR2">
    <property type="method" value="EM"/>
    <property type="resolution" value="3.10 A"/>
    <property type="chains" value="i=1-128"/>
</dbReference>
<dbReference type="PDB" id="6ZTQ">
    <property type="method" value="EM"/>
    <property type="resolution" value="3.00 A"/>
    <property type="chains" value="i=1-128"/>
</dbReference>
<dbReference type="PDB" id="7AK5">
    <property type="method" value="EM"/>
    <property type="resolution" value="3.17 A"/>
    <property type="chains" value="i=2-128"/>
</dbReference>
<dbReference type="PDB" id="7AK6">
    <property type="method" value="EM"/>
    <property type="resolution" value="3.82 A"/>
    <property type="chains" value="i=1-128"/>
</dbReference>
<dbReference type="PDB" id="7B93">
    <property type="method" value="EM"/>
    <property type="resolution" value="3.04 A"/>
    <property type="chains" value="i=1-128"/>
</dbReference>
<dbReference type="PDB" id="7PSA">
    <property type="method" value="EM"/>
    <property type="resolution" value="3.40 A"/>
    <property type="chains" value="i=1-128"/>
</dbReference>
<dbReference type="PDB" id="8C2S">
    <property type="method" value="EM"/>
    <property type="resolution" value="3.90 A"/>
    <property type="chains" value="i=2-128"/>
</dbReference>
<dbReference type="PDB" id="8CA3">
    <property type="method" value="EM"/>
    <property type="resolution" value="3.20 A"/>
    <property type="chains" value="i=2-128"/>
</dbReference>
<dbReference type="PDB" id="8CA5">
    <property type="method" value="EM"/>
    <property type="resolution" value="3.90 A"/>
    <property type="chains" value="i=1-128"/>
</dbReference>
<dbReference type="PDB" id="8IAO">
    <property type="method" value="EM"/>
    <property type="resolution" value="4.20 A"/>
    <property type="chains" value="i=1-128"/>
</dbReference>
<dbReference type="PDB" id="8IAQ">
    <property type="method" value="EM"/>
    <property type="resolution" value="3.40 A"/>
    <property type="chains" value="i=1-128"/>
</dbReference>
<dbReference type="PDB" id="8IB4">
    <property type="method" value="EM"/>
    <property type="resolution" value="4.30 A"/>
    <property type="chains" value="i=1-128"/>
</dbReference>
<dbReference type="PDB" id="8IB6">
    <property type="method" value="EM"/>
    <property type="resolution" value="3.30 A"/>
    <property type="chains" value="i=1-128"/>
</dbReference>
<dbReference type="PDB" id="8IB9">
    <property type="method" value="EM"/>
    <property type="resolution" value="4.30 A"/>
    <property type="chains" value="i=1-128"/>
</dbReference>
<dbReference type="PDB" id="8IBB">
    <property type="method" value="EM"/>
    <property type="resolution" value="3.30 A"/>
    <property type="chains" value="i=1-128"/>
</dbReference>
<dbReference type="PDB" id="8IBD">
    <property type="method" value="EM"/>
    <property type="resolution" value="4.20 A"/>
    <property type="chains" value="i=1-128"/>
</dbReference>
<dbReference type="PDB" id="8IBF">
    <property type="method" value="EM"/>
    <property type="resolution" value="3.30 A"/>
    <property type="chains" value="i=1-128"/>
</dbReference>
<dbReference type="PDB" id="8IC2">
    <property type="method" value="EM"/>
    <property type="resolution" value="6.30 A"/>
    <property type="chains" value="i=1-128"/>
</dbReference>
<dbReference type="PDB" id="8IC4">
    <property type="method" value="EM"/>
    <property type="resolution" value="3.20 A"/>
    <property type="chains" value="i=1-128"/>
</dbReference>
<dbReference type="PDB" id="8OLT">
    <property type="method" value="EM"/>
    <property type="resolution" value="2.84 A"/>
    <property type="chains" value="i=1-128"/>
</dbReference>
<dbReference type="PDB" id="8OM1">
    <property type="method" value="EM"/>
    <property type="resolution" value="2.39 A"/>
    <property type="chains" value="i=2-128"/>
</dbReference>
<dbReference type="PDB" id="8PW5">
    <property type="method" value="EM"/>
    <property type="resolution" value="3.60 A"/>
    <property type="chains" value="i1=1-128"/>
</dbReference>
<dbReference type="PDB" id="8PW6">
    <property type="method" value="EM"/>
    <property type="resolution" value="3.30 A"/>
    <property type="chains" value="i1=1-128"/>
</dbReference>
<dbReference type="PDB" id="8PW7">
    <property type="method" value="EM"/>
    <property type="resolution" value="3.50 A"/>
    <property type="chains" value="i1=1-128"/>
</dbReference>
<dbReference type="PDB" id="8RGP">
    <property type="method" value="EM"/>
    <property type="resolution" value="3.00 A"/>
    <property type="chains" value="i=1-128"/>
</dbReference>
<dbReference type="PDB" id="8RGQ">
    <property type="method" value="EM"/>
    <property type="resolution" value="3.00 A"/>
    <property type="chains" value="i=1-128"/>
</dbReference>
<dbReference type="PDB" id="8RGR">
    <property type="method" value="EM"/>
    <property type="resolution" value="2.90 A"/>
    <property type="chains" value="i=1-128"/>
</dbReference>
<dbReference type="PDB" id="8RGT">
    <property type="method" value="EM"/>
    <property type="resolution" value="3.10 A"/>
    <property type="chains" value="i=1-128"/>
</dbReference>
<dbReference type="PDB" id="8UCA">
    <property type="method" value="EM"/>
    <property type="resolution" value="3.70 A"/>
    <property type="chains" value="B6/b6=2-128"/>
</dbReference>
<dbReference type="PDBsum" id="6G2J"/>
<dbReference type="PDBsum" id="6G72"/>
<dbReference type="PDBsum" id="6ZR2"/>
<dbReference type="PDBsum" id="6ZTQ"/>
<dbReference type="PDBsum" id="7AK5"/>
<dbReference type="PDBsum" id="7AK6"/>
<dbReference type="PDBsum" id="7B93"/>
<dbReference type="PDBsum" id="7PSA"/>
<dbReference type="PDBsum" id="8C2S"/>
<dbReference type="PDBsum" id="8CA3"/>
<dbReference type="PDBsum" id="8CA5"/>
<dbReference type="PDBsum" id="8IAO"/>
<dbReference type="PDBsum" id="8IAQ"/>
<dbReference type="PDBsum" id="8IB4"/>
<dbReference type="PDBsum" id="8IB6"/>
<dbReference type="PDBsum" id="8IB9"/>
<dbReference type="PDBsum" id="8IBB"/>
<dbReference type="PDBsum" id="8IBD"/>
<dbReference type="PDBsum" id="8IBF"/>
<dbReference type="PDBsum" id="8IC2"/>
<dbReference type="PDBsum" id="8IC4"/>
<dbReference type="PDBsum" id="8OLT"/>
<dbReference type="PDBsum" id="8OM1"/>
<dbReference type="PDBsum" id="8PW5"/>
<dbReference type="PDBsum" id="8PW6"/>
<dbReference type="PDBsum" id="8PW7"/>
<dbReference type="PDBsum" id="8RGP"/>
<dbReference type="PDBsum" id="8RGQ"/>
<dbReference type="PDBsum" id="8RGR"/>
<dbReference type="PDBsum" id="8RGT"/>
<dbReference type="PDBsum" id="8UCA"/>
<dbReference type="EMDB" id="EMD-16398"/>
<dbReference type="EMDB" id="EMD-16516"/>
<dbReference type="EMDB" id="EMD-16518"/>
<dbReference type="EMDB" id="EMD-16962"/>
<dbReference type="EMDB" id="EMD-16965"/>
<dbReference type="EMDB" id="EMD-17989"/>
<dbReference type="EMDB" id="EMD-17990"/>
<dbReference type="EMDB" id="EMD-17991"/>
<dbReference type="EMDB" id="EMD-19145"/>
<dbReference type="EMDB" id="EMD-19146"/>
<dbReference type="EMDB" id="EMD-19147"/>
<dbReference type="EMDB" id="EMD-19148"/>
<dbReference type="EMDB" id="EMD-35313"/>
<dbReference type="EMDB" id="EMD-35315"/>
<dbReference type="EMDB" id="EMD-35331"/>
<dbReference type="EMDB" id="EMD-35333"/>
<dbReference type="EMDB" id="EMD-35336"/>
<dbReference type="EMDB" id="EMD-35338"/>
<dbReference type="EMDB" id="EMD-35340"/>
<dbReference type="EMDB" id="EMD-35342"/>
<dbReference type="EMDB" id="EMD-35352"/>
<dbReference type="EMDB" id="EMD-35354"/>
<dbReference type="EMDB" id="EMD-42122"/>
<dbReference type="EMDB" id="EMD-4356"/>
<dbReference type="SMR" id="Q3UIU2"/>
<dbReference type="BioGRID" id="230927">
    <property type="interactions" value="46"/>
</dbReference>
<dbReference type="ComplexPortal" id="CPX-266">
    <property type="entry name" value="Mitochondrial respiratory chain complex I"/>
</dbReference>
<dbReference type="CORUM" id="Q3UIU2"/>
<dbReference type="FunCoup" id="Q3UIU2">
    <property type="interactions" value="1309"/>
</dbReference>
<dbReference type="IntAct" id="Q3UIU2">
    <property type="interactions" value="4"/>
</dbReference>
<dbReference type="MINT" id="Q3UIU2"/>
<dbReference type="STRING" id="10090.ENSMUSP00000092746"/>
<dbReference type="GlyGen" id="Q3UIU2">
    <property type="glycosylation" value="1 site, 1 O-linked glycan (1 site)"/>
</dbReference>
<dbReference type="iPTMnet" id="Q3UIU2"/>
<dbReference type="PhosphoSitePlus" id="Q3UIU2"/>
<dbReference type="jPOST" id="Q3UIU2"/>
<dbReference type="PaxDb" id="10090-ENSMUSP00000092746"/>
<dbReference type="ProteomicsDB" id="252941"/>
<dbReference type="Pumba" id="Q3UIU2"/>
<dbReference type="Antibodypedia" id="25071">
    <property type="antibodies" value="100 antibodies from 22 providers"/>
</dbReference>
<dbReference type="Ensembl" id="ENSMUST00000095128.10">
    <property type="protein sequence ID" value="ENSMUSP00000092746.4"/>
    <property type="gene ID" value="ENSMUSG00000071014.11"/>
</dbReference>
<dbReference type="GeneID" id="230075"/>
<dbReference type="KEGG" id="mmu:230075"/>
<dbReference type="UCSC" id="uc008shk.1">
    <property type="organism name" value="mouse"/>
</dbReference>
<dbReference type="AGR" id="MGI:2684983"/>
<dbReference type="CTD" id="4712"/>
<dbReference type="MGI" id="MGI:2684983">
    <property type="gene designation" value="Ndufb6"/>
</dbReference>
<dbReference type="VEuPathDB" id="HostDB:ENSMUSG00000071014"/>
<dbReference type="eggNOG" id="KOG4633">
    <property type="taxonomic scope" value="Eukaryota"/>
</dbReference>
<dbReference type="GeneTree" id="ENSGT00390000007535"/>
<dbReference type="InParanoid" id="Q3UIU2"/>
<dbReference type="OMA" id="KYHVNTK"/>
<dbReference type="OrthoDB" id="5824032at2759"/>
<dbReference type="PhylomeDB" id="Q3UIU2"/>
<dbReference type="TreeFam" id="TF328587"/>
<dbReference type="Reactome" id="R-MMU-611105">
    <property type="pathway name" value="Respiratory electron transport"/>
</dbReference>
<dbReference type="Reactome" id="R-MMU-6799198">
    <property type="pathway name" value="Complex I biogenesis"/>
</dbReference>
<dbReference type="BioGRID-ORCS" id="230075">
    <property type="hits" value="16 hits in 77 CRISPR screens"/>
</dbReference>
<dbReference type="CD-CODE" id="CE726F99">
    <property type="entry name" value="Postsynaptic density"/>
</dbReference>
<dbReference type="ChiTaRS" id="Ndufb6">
    <property type="organism name" value="mouse"/>
</dbReference>
<dbReference type="PRO" id="PR:Q3UIU2"/>
<dbReference type="Proteomes" id="UP000000589">
    <property type="component" value="Chromosome 4"/>
</dbReference>
<dbReference type="RNAct" id="Q3UIU2">
    <property type="molecule type" value="protein"/>
</dbReference>
<dbReference type="Bgee" id="ENSMUSG00000071014">
    <property type="expression patterns" value="Expressed in intercostal muscle and 267 other cell types or tissues"/>
</dbReference>
<dbReference type="ExpressionAtlas" id="Q3UIU2">
    <property type="expression patterns" value="baseline and differential"/>
</dbReference>
<dbReference type="GO" id="GO:0005743">
    <property type="term" value="C:mitochondrial inner membrane"/>
    <property type="evidence" value="ECO:0000314"/>
    <property type="project" value="UniProtKB"/>
</dbReference>
<dbReference type="GO" id="GO:0005739">
    <property type="term" value="C:mitochondrion"/>
    <property type="evidence" value="ECO:0000314"/>
    <property type="project" value="MGI"/>
</dbReference>
<dbReference type="GO" id="GO:0005654">
    <property type="term" value="C:nucleoplasm"/>
    <property type="evidence" value="ECO:0007669"/>
    <property type="project" value="Ensembl"/>
</dbReference>
<dbReference type="GO" id="GO:0045271">
    <property type="term" value="C:respiratory chain complex I"/>
    <property type="evidence" value="ECO:0000314"/>
    <property type="project" value="UniProtKB"/>
</dbReference>
<dbReference type="GO" id="GO:0009060">
    <property type="term" value="P:aerobic respiration"/>
    <property type="evidence" value="ECO:0000303"/>
    <property type="project" value="ComplexPortal"/>
</dbReference>
<dbReference type="GO" id="GO:0006120">
    <property type="term" value="P:mitochondrial electron transport, NADH to ubiquinone"/>
    <property type="evidence" value="ECO:0007669"/>
    <property type="project" value="InterPro"/>
</dbReference>
<dbReference type="GO" id="GO:0042776">
    <property type="term" value="P:proton motive force-driven mitochondrial ATP synthesis"/>
    <property type="evidence" value="ECO:0000303"/>
    <property type="project" value="ComplexPortal"/>
</dbReference>
<dbReference type="InterPro" id="IPR019174">
    <property type="entry name" value="NADH_DH_b-subcmplx_su6"/>
</dbReference>
<dbReference type="PANTHER" id="PTHR15083">
    <property type="entry name" value="NADH DEHYDROGENASE [UBIQUINONE] 1 BETA SUBCOMPLEX SUBUNIT 6"/>
    <property type="match status" value="1"/>
</dbReference>
<dbReference type="PANTHER" id="PTHR15083:SF0">
    <property type="entry name" value="NADH DEHYDROGENASE [UBIQUINONE] 1 BETA SUBCOMPLEX SUBUNIT 6"/>
    <property type="match status" value="1"/>
</dbReference>
<dbReference type="Pfam" id="PF09782">
    <property type="entry name" value="NDUF_B6"/>
    <property type="match status" value="1"/>
</dbReference>
<proteinExistence type="evidence at protein level"/>
<comment type="function">
    <text evidence="3">Accessory subunit of the mitochondrial membrane respiratory chain NADH dehydrogenase (Complex I), that is believed not to be involved in catalysis. Complex I functions in the transfer of electrons from NADH to the respiratory chain. The immediate electron acceptor for the enzyme is believed to be ubiquinone.</text>
</comment>
<comment type="subunit">
    <text evidence="3">Complex I is composed of 45 different subunits.</text>
</comment>
<comment type="subcellular location">
    <subcellularLocation>
        <location evidence="3">Mitochondrion inner membrane</location>
        <topology evidence="2">Single-pass membrane protein</topology>
        <orientation evidence="3">Matrix side</orientation>
    </subcellularLocation>
</comment>
<comment type="similarity">
    <text evidence="4">Belongs to the complex I NDUFB6 subunit family.</text>
</comment>
<keyword id="KW-0002">3D-structure</keyword>
<keyword id="KW-0007">Acetylation</keyword>
<keyword id="KW-0249">Electron transport</keyword>
<keyword id="KW-0472">Membrane</keyword>
<keyword id="KW-0496">Mitochondrion</keyword>
<keyword id="KW-0999">Mitochondrion inner membrane</keyword>
<keyword id="KW-1185">Reference proteome</keyword>
<keyword id="KW-0679">Respiratory chain</keyword>
<keyword id="KW-0812">Transmembrane</keyword>
<keyword id="KW-1133">Transmembrane helix</keyword>
<keyword id="KW-0813">Transport</keyword>
<reference key="1">
    <citation type="journal article" date="2005" name="Science">
        <title>The transcriptional landscape of the mammalian genome.</title>
        <authorList>
            <person name="Carninci P."/>
            <person name="Kasukawa T."/>
            <person name="Katayama S."/>
            <person name="Gough J."/>
            <person name="Frith M.C."/>
            <person name="Maeda N."/>
            <person name="Oyama R."/>
            <person name="Ravasi T."/>
            <person name="Lenhard B."/>
            <person name="Wells C."/>
            <person name="Kodzius R."/>
            <person name="Shimokawa K."/>
            <person name="Bajic V.B."/>
            <person name="Brenner S.E."/>
            <person name="Batalov S."/>
            <person name="Forrest A.R."/>
            <person name="Zavolan M."/>
            <person name="Davis M.J."/>
            <person name="Wilming L.G."/>
            <person name="Aidinis V."/>
            <person name="Allen J.E."/>
            <person name="Ambesi-Impiombato A."/>
            <person name="Apweiler R."/>
            <person name="Aturaliya R.N."/>
            <person name="Bailey T.L."/>
            <person name="Bansal M."/>
            <person name="Baxter L."/>
            <person name="Beisel K.W."/>
            <person name="Bersano T."/>
            <person name="Bono H."/>
            <person name="Chalk A.M."/>
            <person name="Chiu K.P."/>
            <person name="Choudhary V."/>
            <person name="Christoffels A."/>
            <person name="Clutterbuck D.R."/>
            <person name="Crowe M.L."/>
            <person name="Dalla E."/>
            <person name="Dalrymple B.P."/>
            <person name="de Bono B."/>
            <person name="Della Gatta G."/>
            <person name="di Bernardo D."/>
            <person name="Down T."/>
            <person name="Engstrom P."/>
            <person name="Fagiolini M."/>
            <person name="Faulkner G."/>
            <person name="Fletcher C.F."/>
            <person name="Fukushima T."/>
            <person name="Furuno M."/>
            <person name="Futaki S."/>
            <person name="Gariboldi M."/>
            <person name="Georgii-Hemming P."/>
            <person name="Gingeras T.R."/>
            <person name="Gojobori T."/>
            <person name="Green R.E."/>
            <person name="Gustincich S."/>
            <person name="Harbers M."/>
            <person name="Hayashi Y."/>
            <person name="Hensch T.K."/>
            <person name="Hirokawa N."/>
            <person name="Hill D."/>
            <person name="Huminiecki L."/>
            <person name="Iacono M."/>
            <person name="Ikeo K."/>
            <person name="Iwama A."/>
            <person name="Ishikawa T."/>
            <person name="Jakt M."/>
            <person name="Kanapin A."/>
            <person name="Katoh M."/>
            <person name="Kawasawa Y."/>
            <person name="Kelso J."/>
            <person name="Kitamura H."/>
            <person name="Kitano H."/>
            <person name="Kollias G."/>
            <person name="Krishnan S.P."/>
            <person name="Kruger A."/>
            <person name="Kummerfeld S.K."/>
            <person name="Kurochkin I.V."/>
            <person name="Lareau L.F."/>
            <person name="Lazarevic D."/>
            <person name="Lipovich L."/>
            <person name="Liu J."/>
            <person name="Liuni S."/>
            <person name="McWilliam S."/>
            <person name="Madan Babu M."/>
            <person name="Madera M."/>
            <person name="Marchionni L."/>
            <person name="Matsuda H."/>
            <person name="Matsuzawa S."/>
            <person name="Miki H."/>
            <person name="Mignone F."/>
            <person name="Miyake S."/>
            <person name="Morris K."/>
            <person name="Mottagui-Tabar S."/>
            <person name="Mulder N."/>
            <person name="Nakano N."/>
            <person name="Nakauchi H."/>
            <person name="Ng P."/>
            <person name="Nilsson R."/>
            <person name="Nishiguchi S."/>
            <person name="Nishikawa S."/>
            <person name="Nori F."/>
            <person name="Ohara O."/>
            <person name="Okazaki Y."/>
            <person name="Orlando V."/>
            <person name="Pang K.C."/>
            <person name="Pavan W.J."/>
            <person name="Pavesi G."/>
            <person name="Pesole G."/>
            <person name="Petrovsky N."/>
            <person name="Piazza S."/>
            <person name="Reed J."/>
            <person name="Reid J.F."/>
            <person name="Ring B.Z."/>
            <person name="Ringwald M."/>
            <person name="Rost B."/>
            <person name="Ruan Y."/>
            <person name="Salzberg S.L."/>
            <person name="Sandelin A."/>
            <person name="Schneider C."/>
            <person name="Schoenbach C."/>
            <person name="Sekiguchi K."/>
            <person name="Semple C.A."/>
            <person name="Seno S."/>
            <person name="Sessa L."/>
            <person name="Sheng Y."/>
            <person name="Shibata Y."/>
            <person name="Shimada H."/>
            <person name="Shimada K."/>
            <person name="Silva D."/>
            <person name="Sinclair B."/>
            <person name="Sperling S."/>
            <person name="Stupka E."/>
            <person name="Sugiura K."/>
            <person name="Sultana R."/>
            <person name="Takenaka Y."/>
            <person name="Taki K."/>
            <person name="Tammoja K."/>
            <person name="Tan S.L."/>
            <person name="Tang S."/>
            <person name="Taylor M.S."/>
            <person name="Tegner J."/>
            <person name="Teichmann S.A."/>
            <person name="Ueda H.R."/>
            <person name="van Nimwegen E."/>
            <person name="Verardo R."/>
            <person name="Wei C.L."/>
            <person name="Yagi K."/>
            <person name="Yamanishi H."/>
            <person name="Zabarovsky E."/>
            <person name="Zhu S."/>
            <person name="Zimmer A."/>
            <person name="Hide W."/>
            <person name="Bult C."/>
            <person name="Grimmond S.M."/>
            <person name="Teasdale R.D."/>
            <person name="Liu E.T."/>
            <person name="Brusic V."/>
            <person name="Quackenbush J."/>
            <person name="Wahlestedt C."/>
            <person name="Mattick J.S."/>
            <person name="Hume D.A."/>
            <person name="Kai C."/>
            <person name="Sasaki D."/>
            <person name="Tomaru Y."/>
            <person name="Fukuda S."/>
            <person name="Kanamori-Katayama M."/>
            <person name="Suzuki M."/>
            <person name="Aoki J."/>
            <person name="Arakawa T."/>
            <person name="Iida J."/>
            <person name="Imamura K."/>
            <person name="Itoh M."/>
            <person name="Kato T."/>
            <person name="Kawaji H."/>
            <person name="Kawagashira N."/>
            <person name="Kawashima T."/>
            <person name="Kojima M."/>
            <person name="Kondo S."/>
            <person name="Konno H."/>
            <person name="Nakano K."/>
            <person name="Ninomiya N."/>
            <person name="Nishio T."/>
            <person name="Okada M."/>
            <person name="Plessy C."/>
            <person name="Shibata K."/>
            <person name="Shiraki T."/>
            <person name="Suzuki S."/>
            <person name="Tagami M."/>
            <person name="Waki K."/>
            <person name="Watahiki A."/>
            <person name="Okamura-Oho Y."/>
            <person name="Suzuki H."/>
            <person name="Kawai J."/>
            <person name="Hayashizaki Y."/>
        </authorList>
    </citation>
    <scope>NUCLEOTIDE SEQUENCE [LARGE SCALE MRNA]</scope>
    <source>
        <strain>C57BL/6J</strain>
        <tissue>Amnion</tissue>
    </source>
</reference>
<reference key="2">
    <citation type="journal article" date="2010" name="Cell">
        <title>A tissue-specific atlas of mouse protein phosphorylation and expression.</title>
        <authorList>
            <person name="Huttlin E.L."/>
            <person name="Jedrychowski M.P."/>
            <person name="Elias J.E."/>
            <person name="Goswami T."/>
            <person name="Rad R."/>
            <person name="Beausoleil S.A."/>
            <person name="Villen J."/>
            <person name="Haas W."/>
            <person name="Sowa M.E."/>
            <person name="Gygi S.P."/>
        </authorList>
    </citation>
    <scope>IDENTIFICATION BY MASS SPECTROMETRY [LARGE SCALE ANALYSIS]</scope>
    <source>
        <tissue>Brain</tissue>
        <tissue>Brown adipose tissue</tissue>
        <tissue>Heart</tissue>
        <tissue>Kidney</tissue>
        <tissue>Liver</tissue>
        <tissue>Lung</tissue>
        <tissue>Pancreas</tissue>
        <tissue>Testis</tissue>
    </source>
</reference>
<reference key="3">
    <citation type="journal article" date="2013" name="Proc. Natl. Acad. Sci. U.S.A.">
        <title>Label-free quantitative proteomics of the lysine acetylome in mitochondria identifies substrates of SIRT3 in metabolic pathways.</title>
        <authorList>
            <person name="Rardin M.J."/>
            <person name="Newman J.C."/>
            <person name="Held J.M."/>
            <person name="Cusack M.P."/>
            <person name="Sorensen D.J."/>
            <person name="Li B."/>
            <person name="Schilling B."/>
            <person name="Mooney S.D."/>
            <person name="Kahn C.R."/>
            <person name="Verdin E."/>
            <person name="Gibson B.W."/>
        </authorList>
    </citation>
    <scope>ACETYLATION [LARGE SCALE ANALYSIS] AT LYS-24</scope>
    <scope>IDENTIFICATION BY MASS SPECTROMETRY [LARGE SCALE ANALYSIS]</scope>
    <source>
        <tissue>Liver</tissue>
    </source>
</reference>
<reference evidence="5" key="4">
    <citation type="journal article" date="2024" name="Nat. Struct. Mol. Biol.">
        <title>SCAF1 drives the compositional diversity of mammalian respirasomes.</title>
        <authorList>
            <person name="Vercellino I."/>
            <person name="Sazanov L.A."/>
        </authorList>
    </citation>
    <scope>STRUCTURE BY ELECTRON MICROSCOPY (3.60 ANGSTROMS) IN COMPLEX WITH MITOCHONDRIAL RESPIRATORY SUPERCOMPLEX</scope>
    <scope>FUNCTION</scope>
    <scope>SUBCELLULAR LOCATION</scope>
    <scope>SUBUNIT</scope>
</reference>
<accession>Q3UIU2</accession>